<keyword id="KW-0030">Aminoacyl-tRNA synthetase</keyword>
<keyword id="KW-0067">ATP-binding</keyword>
<keyword id="KW-0963">Cytoplasm</keyword>
<keyword id="KW-0436">Ligase</keyword>
<keyword id="KW-0479">Metal-binding</keyword>
<keyword id="KW-0547">Nucleotide-binding</keyword>
<keyword id="KW-0648">Protein biosynthesis</keyword>
<keyword id="KW-0862">Zinc</keyword>
<proteinExistence type="inferred from homology"/>
<reference key="1">
    <citation type="submission" date="2007-02" db="EMBL/GenBank/DDBJ databases">
        <title>Complete sequence of chromosome 1 of Rhodobacter sphaeroides ATCC 17029.</title>
        <authorList>
            <person name="Copeland A."/>
            <person name="Lucas S."/>
            <person name="Lapidus A."/>
            <person name="Barry K."/>
            <person name="Detter J.C."/>
            <person name="Glavina del Rio T."/>
            <person name="Hammon N."/>
            <person name="Israni S."/>
            <person name="Dalin E."/>
            <person name="Tice H."/>
            <person name="Pitluck S."/>
            <person name="Kiss H."/>
            <person name="Brettin T."/>
            <person name="Bruce D."/>
            <person name="Han C."/>
            <person name="Tapia R."/>
            <person name="Gilna P."/>
            <person name="Schmutz J."/>
            <person name="Larimer F."/>
            <person name="Land M."/>
            <person name="Hauser L."/>
            <person name="Kyrpides N."/>
            <person name="Mikhailova N."/>
            <person name="Richardson P."/>
            <person name="Mackenzie C."/>
            <person name="Choudhary M."/>
            <person name="Donohue T.J."/>
            <person name="Kaplan S."/>
        </authorList>
    </citation>
    <scope>NUCLEOTIDE SEQUENCE [LARGE SCALE GENOMIC DNA]</scope>
    <source>
        <strain>ATCC 17029 / ATH 2.4.9</strain>
    </source>
</reference>
<evidence type="ECO:0000255" key="1">
    <source>
        <dbReference type="HAMAP-Rule" id="MF_00098"/>
    </source>
</evidence>
<organism>
    <name type="scientific">Cereibacter sphaeroides (strain ATCC 17029 / ATH 2.4.9)</name>
    <name type="common">Rhodobacter sphaeroides</name>
    <dbReference type="NCBI Taxonomy" id="349101"/>
    <lineage>
        <taxon>Bacteria</taxon>
        <taxon>Pseudomonadati</taxon>
        <taxon>Pseudomonadota</taxon>
        <taxon>Alphaproteobacteria</taxon>
        <taxon>Rhodobacterales</taxon>
        <taxon>Paracoccaceae</taxon>
        <taxon>Cereibacter</taxon>
    </lineage>
</organism>
<name>SYM_CERS1</name>
<feature type="chain" id="PRO_0000331887" description="Methionine--tRNA ligase">
    <location>
        <begin position="1"/>
        <end position="572"/>
    </location>
</feature>
<feature type="short sequence motif" description="'HIGH' region">
    <location>
        <begin position="11"/>
        <end position="21"/>
    </location>
</feature>
<feature type="short sequence motif" description="'KMSKS' region">
    <location>
        <begin position="346"/>
        <end position="350"/>
    </location>
</feature>
<feature type="binding site" evidence="1">
    <location>
        <position position="143"/>
    </location>
    <ligand>
        <name>Zn(2+)</name>
        <dbReference type="ChEBI" id="CHEBI:29105"/>
    </ligand>
</feature>
<feature type="binding site" evidence="1">
    <location>
        <position position="146"/>
    </location>
    <ligand>
        <name>Zn(2+)</name>
        <dbReference type="ChEBI" id="CHEBI:29105"/>
    </ligand>
</feature>
<feature type="binding site" evidence="1">
    <location>
        <position position="156"/>
    </location>
    <ligand>
        <name>Zn(2+)</name>
        <dbReference type="ChEBI" id="CHEBI:29105"/>
    </ligand>
</feature>
<feature type="binding site" evidence="1">
    <location>
        <position position="159"/>
    </location>
    <ligand>
        <name>Zn(2+)</name>
        <dbReference type="ChEBI" id="CHEBI:29105"/>
    </ligand>
</feature>
<feature type="binding site" evidence="1">
    <location>
        <position position="349"/>
    </location>
    <ligand>
        <name>ATP</name>
        <dbReference type="ChEBI" id="CHEBI:30616"/>
    </ligand>
</feature>
<sequence length="572" mass="64606">MARILITSAIPYINGIKHLGNLVGSQLPADLYARYMRGRGHEVMFICATDEHGTPAELAAAKAGKPVEDYCAEMHEVQKEIAAGFRLSFDHFGRSSSARNHRLTQHFAGALAENGFIEEVVERQFFSVADNRFLPDRYIEGTCPNCGYDKARGDQCENCTKQLDPTDLIDPRSAISGSTELELRETKHLYLRQRALKDEIEAWIDSKTDWPVLTTSIAKKWLHDGEGLQDRGITRDLKWGVPVRKGSEPWPGMEGKVFYVWFDAPIEYIAGTAEWADANGKTDADWERWWRTDRGAEDVRYVQFMGKDNVPFHTLSFPATIMGSREPWKLVDYIKSFNYLNYDGGQFSTSQGRGVFMDQALSILPADYWRWWLLSHAPENSDSEFTWENFQSSVNKDLADVLGNLVSRVTKFCRSKFGETVPAGGSPGEREHQLVAELQQRLAAYEACMEAMEVRKAASELRALWVAGNEYLQSAAPWTVVKTDPEQAQAMIRLALNLIRLYAVISRPFIPDAAASMMTSLGCEDWSWPADVGRALEVLPAGHGFTTPEVLFRKITDEERAEWQTRFSGVRS</sequence>
<gene>
    <name evidence="1" type="primary">metG</name>
    <name type="ordered locus">Rsph17029_2081</name>
</gene>
<dbReference type="EC" id="6.1.1.10" evidence="1"/>
<dbReference type="EMBL" id="CP000577">
    <property type="protein sequence ID" value="ABN77184.1"/>
    <property type="molecule type" value="Genomic_DNA"/>
</dbReference>
<dbReference type="RefSeq" id="WP_011841431.1">
    <property type="nucleotide sequence ID" value="NC_009049.1"/>
</dbReference>
<dbReference type="SMR" id="A3PLG8"/>
<dbReference type="KEGG" id="rsh:Rsph17029_2081"/>
<dbReference type="HOGENOM" id="CLU_009710_3_2_5"/>
<dbReference type="GO" id="GO:0017101">
    <property type="term" value="C:aminoacyl-tRNA synthetase multienzyme complex"/>
    <property type="evidence" value="ECO:0007669"/>
    <property type="project" value="TreeGrafter"/>
</dbReference>
<dbReference type="GO" id="GO:0005829">
    <property type="term" value="C:cytosol"/>
    <property type="evidence" value="ECO:0007669"/>
    <property type="project" value="TreeGrafter"/>
</dbReference>
<dbReference type="GO" id="GO:0005524">
    <property type="term" value="F:ATP binding"/>
    <property type="evidence" value="ECO:0007669"/>
    <property type="project" value="UniProtKB-UniRule"/>
</dbReference>
<dbReference type="GO" id="GO:0046872">
    <property type="term" value="F:metal ion binding"/>
    <property type="evidence" value="ECO:0007669"/>
    <property type="project" value="UniProtKB-KW"/>
</dbReference>
<dbReference type="GO" id="GO:0004825">
    <property type="term" value="F:methionine-tRNA ligase activity"/>
    <property type="evidence" value="ECO:0007669"/>
    <property type="project" value="UniProtKB-UniRule"/>
</dbReference>
<dbReference type="GO" id="GO:0006431">
    <property type="term" value="P:methionyl-tRNA aminoacylation"/>
    <property type="evidence" value="ECO:0007669"/>
    <property type="project" value="UniProtKB-UniRule"/>
</dbReference>
<dbReference type="CDD" id="cd07957">
    <property type="entry name" value="Anticodon_Ia_Met"/>
    <property type="match status" value="1"/>
</dbReference>
<dbReference type="CDD" id="cd00814">
    <property type="entry name" value="MetRS_core"/>
    <property type="match status" value="1"/>
</dbReference>
<dbReference type="FunFam" id="2.20.28.20:FF:000001">
    <property type="entry name" value="Methionine--tRNA ligase"/>
    <property type="match status" value="1"/>
</dbReference>
<dbReference type="Gene3D" id="3.40.50.620">
    <property type="entry name" value="HUPs"/>
    <property type="match status" value="1"/>
</dbReference>
<dbReference type="Gene3D" id="1.10.730.10">
    <property type="entry name" value="Isoleucyl-tRNA Synthetase, Domain 1"/>
    <property type="match status" value="1"/>
</dbReference>
<dbReference type="Gene3D" id="2.20.28.20">
    <property type="entry name" value="Methionyl-tRNA synthetase, Zn-domain"/>
    <property type="match status" value="1"/>
</dbReference>
<dbReference type="HAMAP" id="MF_00098">
    <property type="entry name" value="Met_tRNA_synth_type1"/>
    <property type="match status" value="1"/>
</dbReference>
<dbReference type="InterPro" id="IPR041872">
    <property type="entry name" value="Anticodon_Met"/>
</dbReference>
<dbReference type="InterPro" id="IPR023458">
    <property type="entry name" value="Met-tRNA_ligase_1"/>
</dbReference>
<dbReference type="InterPro" id="IPR014758">
    <property type="entry name" value="Met-tRNA_synth"/>
</dbReference>
<dbReference type="InterPro" id="IPR015413">
    <property type="entry name" value="Methionyl/Leucyl_tRNA_Synth"/>
</dbReference>
<dbReference type="InterPro" id="IPR033911">
    <property type="entry name" value="MetRS_core"/>
</dbReference>
<dbReference type="InterPro" id="IPR029038">
    <property type="entry name" value="MetRS_Zn"/>
</dbReference>
<dbReference type="InterPro" id="IPR014729">
    <property type="entry name" value="Rossmann-like_a/b/a_fold"/>
</dbReference>
<dbReference type="InterPro" id="IPR009080">
    <property type="entry name" value="tRNAsynth_Ia_anticodon-bd"/>
</dbReference>
<dbReference type="NCBIfam" id="TIGR00398">
    <property type="entry name" value="metG"/>
    <property type="match status" value="1"/>
</dbReference>
<dbReference type="PANTHER" id="PTHR45765">
    <property type="entry name" value="METHIONINE--TRNA LIGASE"/>
    <property type="match status" value="1"/>
</dbReference>
<dbReference type="PANTHER" id="PTHR45765:SF1">
    <property type="entry name" value="METHIONINE--TRNA LIGASE, CYTOPLASMIC"/>
    <property type="match status" value="1"/>
</dbReference>
<dbReference type="Pfam" id="PF19303">
    <property type="entry name" value="Anticodon_3"/>
    <property type="match status" value="1"/>
</dbReference>
<dbReference type="Pfam" id="PF09334">
    <property type="entry name" value="tRNA-synt_1g"/>
    <property type="match status" value="1"/>
</dbReference>
<dbReference type="PRINTS" id="PR01041">
    <property type="entry name" value="TRNASYNTHMET"/>
</dbReference>
<dbReference type="SUPFAM" id="SSF47323">
    <property type="entry name" value="Anticodon-binding domain of a subclass of class I aminoacyl-tRNA synthetases"/>
    <property type="match status" value="1"/>
</dbReference>
<dbReference type="SUPFAM" id="SSF57770">
    <property type="entry name" value="Methionyl-tRNA synthetase (MetRS), Zn-domain"/>
    <property type="match status" value="1"/>
</dbReference>
<dbReference type="SUPFAM" id="SSF52374">
    <property type="entry name" value="Nucleotidylyl transferase"/>
    <property type="match status" value="1"/>
</dbReference>
<accession>A3PLG8</accession>
<protein>
    <recommendedName>
        <fullName evidence="1">Methionine--tRNA ligase</fullName>
        <ecNumber evidence="1">6.1.1.10</ecNumber>
    </recommendedName>
    <alternativeName>
        <fullName evidence="1">Methionyl-tRNA synthetase</fullName>
        <shortName evidence="1">MetRS</shortName>
    </alternativeName>
</protein>
<comment type="function">
    <text evidence="1">Is required not only for elongation of protein synthesis but also for the initiation of all mRNA translation through initiator tRNA(fMet) aminoacylation.</text>
</comment>
<comment type="catalytic activity">
    <reaction evidence="1">
        <text>tRNA(Met) + L-methionine + ATP = L-methionyl-tRNA(Met) + AMP + diphosphate</text>
        <dbReference type="Rhea" id="RHEA:13481"/>
        <dbReference type="Rhea" id="RHEA-COMP:9667"/>
        <dbReference type="Rhea" id="RHEA-COMP:9698"/>
        <dbReference type="ChEBI" id="CHEBI:30616"/>
        <dbReference type="ChEBI" id="CHEBI:33019"/>
        <dbReference type="ChEBI" id="CHEBI:57844"/>
        <dbReference type="ChEBI" id="CHEBI:78442"/>
        <dbReference type="ChEBI" id="CHEBI:78530"/>
        <dbReference type="ChEBI" id="CHEBI:456215"/>
        <dbReference type="EC" id="6.1.1.10"/>
    </reaction>
</comment>
<comment type="cofactor">
    <cofactor evidence="1">
        <name>Zn(2+)</name>
        <dbReference type="ChEBI" id="CHEBI:29105"/>
    </cofactor>
    <text evidence="1">Binds 1 zinc ion per subunit.</text>
</comment>
<comment type="subunit">
    <text evidence="1">Monomer.</text>
</comment>
<comment type="subcellular location">
    <subcellularLocation>
        <location evidence="1">Cytoplasm</location>
    </subcellularLocation>
</comment>
<comment type="similarity">
    <text evidence="1">Belongs to the class-I aminoacyl-tRNA synthetase family. MetG type 1 subfamily.</text>
</comment>